<proteinExistence type="evidence at protein level"/>
<organism>
    <name type="scientific">Schizosaccharomyces pombe (strain 972 / ATCC 24843)</name>
    <name type="common">Fission yeast</name>
    <dbReference type="NCBI Taxonomy" id="284812"/>
    <lineage>
        <taxon>Eukaryota</taxon>
        <taxon>Fungi</taxon>
        <taxon>Dikarya</taxon>
        <taxon>Ascomycota</taxon>
        <taxon>Taphrinomycotina</taxon>
        <taxon>Schizosaccharomycetes</taxon>
        <taxon>Schizosaccharomycetales</taxon>
        <taxon>Schizosaccharomycetaceae</taxon>
        <taxon>Schizosaccharomyces</taxon>
    </lineage>
</organism>
<sequence>MPHMEDNGSEKEQLFLQHIQNLPQERLDAIRGHPELVLKEIDEFTYPDGSGVRMCIGDVKGGFIVGKIRERKPKIMVELGGYLGYSAILFGNEISKIPGGRYYSLEVNEDYAKIAYELVKLAGLDEIVTIMIGKACDSLVELQQKLLHKDLGFQALDMVFIDHWKDLYVPDLRVIESLNMIAPGTLLVADNIITPGAPEYHKYVNMSPEERRGYQAKVRNVNGFDFIGRWDLIYKTETKEFEGVIRNKHRKDAVDVTECVGYAKKD</sequence>
<protein>
    <recommendedName>
        <fullName>Probable catechol O-methyltransferase 1</fullName>
        <ecNumber>2.1.1.6</ecNumber>
    </recommendedName>
</protein>
<evidence type="ECO:0000250" key="1"/>
<evidence type="ECO:0000255" key="2">
    <source>
        <dbReference type="PROSITE-ProRule" id="PRU01019"/>
    </source>
</evidence>
<evidence type="ECO:0000269" key="3">
    <source>
    </source>
</evidence>
<evidence type="ECO:0007829" key="4">
    <source>
        <dbReference type="PDB" id="5ZY6"/>
    </source>
</evidence>
<gene>
    <name type="ORF">SPBC119.03</name>
</gene>
<comment type="catalytic activity">
    <reaction>
        <text>a catechol + S-adenosyl-L-methionine = a guaiacol + S-adenosyl-L-homocysteine + H(+)</text>
        <dbReference type="Rhea" id="RHEA:17877"/>
        <dbReference type="ChEBI" id="CHEBI:15378"/>
        <dbReference type="ChEBI" id="CHEBI:33566"/>
        <dbReference type="ChEBI" id="CHEBI:57856"/>
        <dbReference type="ChEBI" id="CHEBI:59789"/>
        <dbReference type="ChEBI" id="CHEBI:134251"/>
        <dbReference type="EC" id="2.1.1.6"/>
    </reaction>
</comment>
<comment type="cofactor">
    <cofactor evidence="1">
        <name>Mg(2+)</name>
        <dbReference type="ChEBI" id="CHEBI:18420"/>
    </cofactor>
    <text evidence="1">Binds 1 Mg(2+) ion per subunit.</text>
</comment>
<comment type="subcellular location">
    <subcellularLocation>
        <location evidence="3">Cytoplasm</location>
    </subcellularLocation>
    <subcellularLocation>
        <location evidence="3">Nucleus</location>
    </subcellularLocation>
</comment>
<comment type="similarity">
    <text evidence="2">Belongs to the class I-like SAM-binding methyltransferase superfamily. Cation-dependent O-methyltransferase family.</text>
</comment>
<accession>O42898</accession>
<dbReference type="EC" id="2.1.1.6"/>
<dbReference type="EMBL" id="CU329671">
    <property type="protein sequence ID" value="CAA17918.1"/>
    <property type="molecule type" value="Genomic_DNA"/>
</dbReference>
<dbReference type="PIR" id="T39301">
    <property type="entry name" value="T39301"/>
</dbReference>
<dbReference type="PDB" id="5ZY5">
    <property type="method" value="X-ray"/>
    <property type="resolution" value="2.29 A"/>
    <property type="chains" value="A/B=1-266"/>
</dbReference>
<dbReference type="PDB" id="5ZY6">
    <property type="method" value="X-ray"/>
    <property type="resolution" value="2.10 A"/>
    <property type="chains" value="A/B=1-266"/>
</dbReference>
<dbReference type="PDBsum" id="5ZY5"/>
<dbReference type="PDBsum" id="5ZY6"/>
<dbReference type="SMR" id="O42898"/>
<dbReference type="BioGRID" id="276612">
    <property type="interactions" value="1"/>
</dbReference>
<dbReference type="FunCoup" id="O42898">
    <property type="interactions" value="82"/>
</dbReference>
<dbReference type="STRING" id="284812.O42898"/>
<dbReference type="iPTMnet" id="O42898"/>
<dbReference type="PaxDb" id="4896-SPBC119.03.1"/>
<dbReference type="EnsemblFungi" id="SPBC119.03.1">
    <property type="protein sequence ID" value="SPBC119.03.1:pep"/>
    <property type="gene ID" value="SPBC119.03"/>
</dbReference>
<dbReference type="KEGG" id="spo:2540074"/>
<dbReference type="PomBase" id="SPBC119.03"/>
<dbReference type="VEuPathDB" id="FungiDB:SPBC119.03"/>
<dbReference type="eggNOG" id="KOG1663">
    <property type="taxonomic scope" value="Eukaryota"/>
</dbReference>
<dbReference type="HOGENOM" id="CLU_050461_0_0_1"/>
<dbReference type="InParanoid" id="O42898"/>
<dbReference type="OMA" id="VEITRCV"/>
<dbReference type="PhylomeDB" id="O42898"/>
<dbReference type="BRENDA" id="2.1.1.6">
    <property type="organism ID" value="5613"/>
</dbReference>
<dbReference type="Reactome" id="R-SPO-156581">
    <property type="pathway name" value="Methylation"/>
</dbReference>
<dbReference type="Reactome" id="R-SPO-379397">
    <property type="pathway name" value="Enzymatic degradation of dopamine by COMT"/>
</dbReference>
<dbReference type="Reactome" id="R-SPO-379398">
    <property type="pathway name" value="Enzymatic degradation of Dopamine by monoamine oxidase"/>
</dbReference>
<dbReference type="PRO" id="PR:O42898"/>
<dbReference type="Proteomes" id="UP000002485">
    <property type="component" value="Chromosome II"/>
</dbReference>
<dbReference type="GO" id="GO:0005829">
    <property type="term" value="C:cytosol"/>
    <property type="evidence" value="ECO:0007005"/>
    <property type="project" value="PomBase"/>
</dbReference>
<dbReference type="GO" id="GO:0005634">
    <property type="term" value="C:nucleus"/>
    <property type="evidence" value="ECO:0007005"/>
    <property type="project" value="PomBase"/>
</dbReference>
<dbReference type="GO" id="GO:0010340">
    <property type="term" value="F:carboxyl-O-methyltransferase activity"/>
    <property type="evidence" value="ECO:0000269"/>
    <property type="project" value="PomBase"/>
</dbReference>
<dbReference type="GO" id="GO:0046872">
    <property type="term" value="F:metal ion binding"/>
    <property type="evidence" value="ECO:0007669"/>
    <property type="project" value="UniProtKB-KW"/>
</dbReference>
<dbReference type="GO" id="GO:0008171">
    <property type="term" value="F:O-methyltransferase activity"/>
    <property type="evidence" value="ECO:0000318"/>
    <property type="project" value="GO_Central"/>
</dbReference>
<dbReference type="GO" id="GO:0006584">
    <property type="term" value="P:catecholamine metabolic process"/>
    <property type="evidence" value="ECO:0007669"/>
    <property type="project" value="UniProtKB-KW"/>
</dbReference>
<dbReference type="GO" id="GO:1990748">
    <property type="term" value="P:cellular detoxification"/>
    <property type="evidence" value="ECO:0000269"/>
    <property type="project" value="PomBase"/>
</dbReference>
<dbReference type="GO" id="GO:0032259">
    <property type="term" value="P:methylation"/>
    <property type="evidence" value="ECO:0007669"/>
    <property type="project" value="UniProtKB-KW"/>
</dbReference>
<dbReference type="FunFam" id="3.40.50.150:FF:000054">
    <property type="entry name" value="Catechol O-methyltransferase"/>
    <property type="match status" value="1"/>
</dbReference>
<dbReference type="Gene3D" id="3.40.50.150">
    <property type="entry name" value="Vaccinia Virus protein VP39"/>
    <property type="match status" value="1"/>
</dbReference>
<dbReference type="InterPro" id="IPR029063">
    <property type="entry name" value="SAM-dependent_MTases_sf"/>
</dbReference>
<dbReference type="InterPro" id="IPR002935">
    <property type="entry name" value="SAM_O-MeTrfase"/>
</dbReference>
<dbReference type="PANTHER" id="PTHR43836">
    <property type="entry name" value="CATECHOL O-METHYLTRANSFERASE 1-RELATED"/>
    <property type="match status" value="1"/>
</dbReference>
<dbReference type="PANTHER" id="PTHR43836:SF2">
    <property type="entry name" value="CATECHOL O-METHYLTRANSFERASE 1-RELATED"/>
    <property type="match status" value="1"/>
</dbReference>
<dbReference type="Pfam" id="PF01596">
    <property type="entry name" value="Methyltransf_3"/>
    <property type="match status" value="1"/>
</dbReference>
<dbReference type="SUPFAM" id="SSF53335">
    <property type="entry name" value="S-adenosyl-L-methionine-dependent methyltransferases"/>
    <property type="match status" value="1"/>
</dbReference>
<dbReference type="PROSITE" id="PS51682">
    <property type="entry name" value="SAM_OMT_I"/>
    <property type="match status" value="1"/>
</dbReference>
<feature type="chain" id="PRO_0000318148" description="Probable catechol O-methyltransferase 1">
    <location>
        <begin position="1"/>
        <end position="266"/>
    </location>
</feature>
<feature type="binding site" evidence="2">
    <location>
        <position position="56"/>
    </location>
    <ligand>
        <name>S-adenosyl-L-methionine</name>
        <dbReference type="ChEBI" id="CHEBI:59789"/>
    </ligand>
</feature>
<feature type="binding site" evidence="2">
    <location>
        <position position="78"/>
    </location>
    <ligand>
        <name>S-adenosyl-L-methionine</name>
        <dbReference type="ChEBI" id="CHEBI:59789"/>
    </ligand>
</feature>
<feature type="binding site" evidence="2">
    <location>
        <position position="86"/>
    </location>
    <ligand>
        <name>S-adenosyl-L-methionine</name>
        <dbReference type="ChEBI" id="CHEBI:59789"/>
    </ligand>
</feature>
<feature type="binding site" evidence="2">
    <location>
        <position position="106"/>
    </location>
    <ligand>
        <name>S-adenosyl-L-methionine</name>
        <dbReference type="ChEBI" id="CHEBI:59789"/>
    </ligand>
</feature>
<feature type="binding site" evidence="2">
    <location>
        <position position="107"/>
    </location>
    <ligand>
        <name>S-adenosyl-L-methionine</name>
        <dbReference type="ChEBI" id="CHEBI:59789"/>
    </ligand>
</feature>
<feature type="binding site" evidence="2">
    <location>
        <position position="135"/>
    </location>
    <ligand>
        <name>S-adenosyl-L-methionine</name>
        <dbReference type="ChEBI" id="CHEBI:59789"/>
    </ligand>
</feature>
<feature type="binding site" evidence="1">
    <location>
        <position position="162"/>
    </location>
    <ligand>
        <name>Mg(2+)</name>
        <dbReference type="ChEBI" id="CHEBI:18420"/>
    </ligand>
</feature>
<feature type="binding site" evidence="2">
    <location>
        <position position="162"/>
    </location>
    <ligand>
        <name>S-adenosyl-L-methionine</name>
        <dbReference type="ChEBI" id="CHEBI:59789"/>
    </ligand>
</feature>
<feature type="binding site" evidence="1">
    <location>
        <position position="165"/>
    </location>
    <ligand>
        <name>substrate</name>
    </ligand>
</feature>
<feature type="binding site" evidence="1">
    <location>
        <position position="190"/>
    </location>
    <ligand>
        <name>Mg(2+)</name>
        <dbReference type="ChEBI" id="CHEBI:18420"/>
    </ligand>
</feature>
<feature type="binding site" evidence="1">
    <location>
        <position position="191"/>
    </location>
    <ligand>
        <name>Mg(2+)</name>
        <dbReference type="ChEBI" id="CHEBI:18420"/>
    </ligand>
</feature>
<feature type="binding site" evidence="1">
    <location>
        <position position="191"/>
    </location>
    <ligand>
        <name>substrate</name>
    </ligand>
</feature>
<feature type="helix" evidence="4">
    <location>
        <begin position="11"/>
        <end position="20"/>
    </location>
</feature>
<feature type="helix" evidence="4">
    <location>
        <begin position="24"/>
        <end position="30"/>
    </location>
</feature>
<feature type="helix" evidence="4">
    <location>
        <begin position="34"/>
        <end position="43"/>
    </location>
</feature>
<feature type="helix" evidence="4">
    <location>
        <begin position="58"/>
        <end position="71"/>
    </location>
</feature>
<feature type="strand" evidence="4">
    <location>
        <begin position="74"/>
        <end position="79"/>
    </location>
</feature>
<feature type="helix" evidence="4">
    <location>
        <begin position="85"/>
        <end position="95"/>
    </location>
</feature>
<feature type="strand" evidence="4">
    <location>
        <begin position="101"/>
        <end position="107"/>
    </location>
</feature>
<feature type="helix" evidence="4">
    <location>
        <begin position="109"/>
        <end position="121"/>
    </location>
</feature>
<feature type="turn" evidence="4">
    <location>
        <begin position="125"/>
        <end position="127"/>
    </location>
</feature>
<feature type="strand" evidence="4">
    <location>
        <begin position="128"/>
        <end position="133"/>
    </location>
</feature>
<feature type="helix" evidence="4">
    <location>
        <begin position="135"/>
        <end position="147"/>
    </location>
</feature>
<feature type="strand" evidence="4">
    <location>
        <begin position="157"/>
        <end position="161"/>
    </location>
</feature>
<feature type="helix" evidence="4">
    <location>
        <begin position="165"/>
        <end position="167"/>
    </location>
</feature>
<feature type="helix" evidence="4">
    <location>
        <begin position="168"/>
        <end position="177"/>
    </location>
</feature>
<feature type="strand" evidence="4">
    <location>
        <begin position="186"/>
        <end position="189"/>
    </location>
</feature>
<feature type="helix" evidence="4">
    <location>
        <begin position="192"/>
        <end position="196"/>
    </location>
</feature>
<feature type="helix" evidence="4">
    <location>
        <begin position="198"/>
        <end position="203"/>
    </location>
</feature>
<feature type="helix" evidence="4">
    <location>
        <begin position="208"/>
        <end position="217"/>
    </location>
</feature>
<feature type="strand" evidence="4">
    <location>
        <begin position="232"/>
        <end position="240"/>
    </location>
</feature>
<feature type="strand" evidence="4">
    <location>
        <begin position="253"/>
        <end position="262"/>
    </location>
</feature>
<keyword id="KW-0002">3D-structure</keyword>
<keyword id="KW-0128">Catecholamine metabolism</keyword>
<keyword id="KW-0963">Cytoplasm</keyword>
<keyword id="KW-0460">Magnesium</keyword>
<keyword id="KW-0479">Metal-binding</keyword>
<keyword id="KW-0489">Methyltransferase</keyword>
<keyword id="KW-0539">Nucleus</keyword>
<keyword id="KW-1185">Reference proteome</keyword>
<keyword id="KW-0949">S-adenosyl-L-methionine</keyword>
<keyword id="KW-0808">Transferase</keyword>
<reference key="1">
    <citation type="journal article" date="2002" name="Nature">
        <title>The genome sequence of Schizosaccharomyces pombe.</title>
        <authorList>
            <person name="Wood V."/>
            <person name="Gwilliam R."/>
            <person name="Rajandream M.A."/>
            <person name="Lyne M.H."/>
            <person name="Lyne R."/>
            <person name="Stewart A."/>
            <person name="Sgouros J.G."/>
            <person name="Peat N."/>
            <person name="Hayles J."/>
            <person name="Baker S.G."/>
            <person name="Basham D."/>
            <person name="Bowman S."/>
            <person name="Brooks K."/>
            <person name="Brown D."/>
            <person name="Brown S."/>
            <person name="Chillingworth T."/>
            <person name="Churcher C.M."/>
            <person name="Collins M."/>
            <person name="Connor R."/>
            <person name="Cronin A."/>
            <person name="Davis P."/>
            <person name="Feltwell T."/>
            <person name="Fraser A."/>
            <person name="Gentles S."/>
            <person name="Goble A."/>
            <person name="Hamlin N."/>
            <person name="Harris D.E."/>
            <person name="Hidalgo J."/>
            <person name="Hodgson G."/>
            <person name="Holroyd S."/>
            <person name="Hornsby T."/>
            <person name="Howarth S."/>
            <person name="Huckle E.J."/>
            <person name="Hunt S."/>
            <person name="Jagels K."/>
            <person name="James K.D."/>
            <person name="Jones L."/>
            <person name="Jones M."/>
            <person name="Leather S."/>
            <person name="McDonald S."/>
            <person name="McLean J."/>
            <person name="Mooney P."/>
            <person name="Moule S."/>
            <person name="Mungall K.L."/>
            <person name="Murphy L.D."/>
            <person name="Niblett D."/>
            <person name="Odell C."/>
            <person name="Oliver K."/>
            <person name="O'Neil S."/>
            <person name="Pearson D."/>
            <person name="Quail M.A."/>
            <person name="Rabbinowitsch E."/>
            <person name="Rutherford K.M."/>
            <person name="Rutter S."/>
            <person name="Saunders D."/>
            <person name="Seeger K."/>
            <person name="Sharp S."/>
            <person name="Skelton J."/>
            <person name="Simmonds M.N."/>
            <person name="Squares R."/>
            <person name="Squares S."/>
            <person name="Stevens K."/>
            <person name="Taylor K."/>
            <person name="Taylor R.G."/>
            <person name="Tivey A."/>
            <person name="Walsh S.V."/>
            <person name="Warren T."/>
            <person name="Whitehead S."/>
            <person name="Woodward J.R."/>
            <person name="Volckaert G."/>
            <person name="Aert R."/>
            <person name="Robben J."/>
            <person name="Grymonprez B."/>
            <person name="Weltjens I."/>
            <person name="Vanstreels E."/>
            <person name="Rieger M."/>
            <person name="Schaefer M."/>
            <person name="Mueller-Auer S."/>
            <person name="Gabel C."/>
            <person name="Fuchs M."/>
            <person name="Duesterhoeft A."/>
            <person name="Fritzc C."/>
            <person name="Holzer E."/>
            <person name="Moestl D."/>
            <person name="Hilbert H."/>
            <person name="Borzym K."/>
            <person name="Langer I."/>
            <person name="Beck A."/>
            <person name="Lehrach H."/>
            <person name="Reinhardt R."/>
            <person name="Pohl T.M."/>
            <person name="Eger P."/>
            <person name="Zimmermann W."/>
            <person name="Wedler H."/>
            <person name="Wambutt R."/>
            <person name="Purnelle B."/>
            <person name="Goffeau A."/>
            <person name="Cadieu E."/>
            <person name="Dreano S."/>
            <person name="Gloux S."/>
            <person name="Lelaure V."/>
            <person name="Mottier S."/>
            <person name="Galibert F."/>
            <person name="Aves S.J."/>
            <person name="Xiang Z."/>
            <person name="Hunt C."/>
            <person name="Moore K."/>
            <person name="Hurst S.M."/>
            <person name="Lucas M."/>
            <person name="Rochet M."/>
            <person name="Gaillardin C."/>
            <person name="Tallada V.A."/>
            <person name="Garzon A."/>
            <person name="Thode G."/>
            <person name="Daga R.R."/>
            <person name="Cruzado L."/>
            <person name="Jimenez J."/>
            <person name="Sanchez M."/>
            <person name="del Rey F."/>
            <person name="Benito J."/>
            <person name="Dominguez A."/>
            <person name="Revuelta J.L."/>
            <person name="Moreno S."/>
            <person name="Armstrong J."/>
            <person name="Forsburg S.L."/>
            <person name="Cerutti L."/>
            <person name="Lowe T."/>
            <person name="McCombie W.R."/>
            <person name="Paulsen I."/>
            <person name="Potashkin J."/>
            <person name="Shpakovski G.V."/>
            <person name="Ussery D."/>
            <person name="Barrell B.G."/>
            <person name="Nurse P."/>
        </authorList>
    </citation>
    <scope>NUCLEOTIDE SEQUENCE [LARGE SCALE GENOMIC DNA]</scope>
    <source>
        <strain>972 / ATCC 24843</strain>
    </source>
</reference>
<reference key="2">
    <citation type="journal article" date="2006" name="Nat. Biotechnol.">
        <title>ORFeome cloning and global analysis of protein localization in the fission yeast Schizosaccharomyces pombe.</title>
        <authorList>
            <person name="Matsuyama A."/>
            <person name="Arai R."/>
            <person name="Yashiroda Y."/>
            <person name="Shirai A."/>
            <person name="Kamata A."/>
            <person name="Sekido S."/>
            <person name="Kobayashi Y."/>
            <person name="Hashimoto A."/>
            <person name="Hamamoto M."/>
            <person name="Hiraoka Y."/>
            <person name="Horinouchi S."/>
            <person name="Yoshida M."/>
        </authorList>
    </citation>
    <scope>SUBCELLULAR LOCATION [LARGE SCALE ANALYSIS]</scope>
</reference>
<name>COMT1_SCHPO</name>